<comment type="similarity">
    <text evidence="1">Belongs to the bacterial ribosomal protein bS16 family.</text>
</comment>
<gene>
    <name evidence="1" type="primary">rpsP</name>
    <name type="ordered locus">Acry_2153</name>
</gene>
<keyword id="KW-1185">Reference proteome</keyword>
<keyword id="KW-0687">Ribonucleoprotein</keyword>
<keyword id="KW-0689">Ribosomal protein</keyword>
<organism>
    <name type="scientific">Acidiphilium cryptum (strain JF-5)</name>
    <dbReference type="NCBI Taxonomy" id="349163"/>
    <lineage>
        <taxon>Bacteria</taxon>
        <taxon>Pseudomonadati</taxon>
        <taxon>Pseudomonadota</taxon>
        <taxon>Alphaproteobacteria</taxon>
        <taxon>Acetobacterales</taxon>
        <taxon>Acidocellaceae</taxon>
        <taxon>Acidiphilium</taxon>
    </lineage>
</organism>
<proteinExistence type="inferred from homology"/>
<protein>
    <recommendedName>
        <fullName evidence="1">Small ribosomal subunit protein bS16</fullName>
    </recommendedName>
    <alternativeName>
        <fullName evidence="3">30S ribosomal protein S16</fullName>
    </alternativeName>
</protein>
<dbReference type="EMBL" id="CP000697">
    <property type="protein sequence ID" value="ABQ31352.1"/>
    <property type="molecule type" value="Genomic_DNA"/>
</dbReference>
<dbReference type="RefSeq" id="WP_007421700.1">
    <property type="nucleotide sequence ID" value="NC_009484.1"/>
</dbReference>
<dbReference type="SMR" id="A5G0H0"/>
<dbReference type="STRING" id="349163.Acry_2153"/>
<dbReference type="KEGG" id="acr:Acry_2153"/>
<dbReference type="eggNOG" id="COG0228">
    <property type="taxonomic scope" value="Bacteria"/>
</dbReference>
<dbReference type="HOGENOM" id="CLU_100590_3_1_5"/>
<dbReference type="Proteomes" id="UP000000245">
    <property type="component" value="Chromosome"/>
</dbReference>
<dbReference type="GO" id="GO:0005737">
    <property type="term" value="C:cytoplasm"/>
    <property type="evidence" value="ECO:0007669"/>
    <property type="project" value="UniProtKB-ARBA"/>
</dbReference>
<dbReference type="GO" id="GO:0015935">
    <property type="term" value="C:small ribosomal subunit"/>
    <property type="evidence" value="ECO:0007669"/>
    <property type="project" value="TreeGrafter"/>
</dbReference>
<dbReference type="GO" id="GO:0003735">
    <property type="term" value="F:structural constituent of ribosome"/>
    <property type="evidence" value="ECO:0007669"/>
    <property type="project" value="InterPro"/>
</dbReference>
<dbReference type="GO" id="GO:0006412">
    <property type="term" value="P:translation"/>
    <property type="evidence" value="ECO:0007669"/>
    <property type="project" value="UniProtKB-UniRule"/>
</dbReference>
<dbReference type="Gene3D" id="3.30.1320.10">
    <property type="match status" value="1"/>
</dbReference>
<dbReference type="HAMAP" id="MF_00385">
    <property type="entry name" value="Ribosomal_bS16"/>
    <property type="match status" value="1"/>
</dbReference>
<dbReference type="InterPro" id="IPR000307">
    <property type="entry name" value="Ribosomal_bS16"/>
</dbReference>
<dbReference type="InterPro" id="IPR020592">
    <property type="entry name" value="Ribosomal_bS16_CS"/>
</dbReference>
<dbReference type="InterPro" id="IPR023803">
    <property type="entry name" value="Ribosomal_bS16_dom_sf"/>
</dbReference>
<dbReference type="NCBIfam" id="TIGR00002">
    <property type="entry name" value="S16"/>
    <property type="match status" value="1"/>
</dbReference>
<dbReference type="PANTHER" id="PTHR12919">
    <property type="entry name" value="30S RIBOSOMAL PROTEIN S16"/>
    <property type="match status" value="1"/>
</dbReference>
<dbReference type="PANTHER" id="PTHR12919:SF20">
    <property type="entry name" value="SMALL RIBOSOMAL SUBUNIT PROTEIN BS16M"/>
    <property type="match status" value="1"/>
</dbReference>
<dbReference type="Pfam" id="PF00886">
    <property type="entry name" value="Ribosomal_S16"/>
    <property type="match status" value="1"/>
</dbReference>
<dbReference type="SUPFAM" id="SSF54565">
    <property type="entry name" value="Ribosomal protein S16"/>
    <property type="match status" value="1"/>
</dbReference>
<dbReference type="PROSITE" id="PS00732">
    <property type="entry name" value="RIBOSOMAL_S16"/>
    <property type="match status" value="1"/>
</dbReference>
<evidence type="ECO:0000255" key="1">
    <source>
        <dbReference type="HAMAP-Rule" id="MF_00385"/>
    </source>
</evidence>
<evidence type="ECO:0000256" key="2">
    <source>
        <dbReference type="SAM" id="MobiDB-lite"/>
    </source>
</evidence>
<evidence type="ECO:0000305" key="3"/>
<accession>A5G0H0</accession>
<name>RS16_ACICJ</name>
<reference key="1">
    <citation type="submission" date="2007-05" db="EMBL/GenBank/DDBJ databases">
        <title>Complete sequence of chromosome of Acidiphilium cryptum JF-5.</title>
        <authorList>
            <consortium name="US DOE Joint Genome Institute"/>
            <person name="Copeland A."/>
            <person name="Lucas S."/>
            <person name="Lapidus A."/>
            <person name="Barry K."/>
            <person name="Detter J.C."/>
            <person name="Glavina del Rio T."/>
            <person name="Hammon N."/>
            <person name="Israni S."/>
            <person name="Dalin E."/>
            <person name="Tice H."/>
            <person name="Pitluck S."/>
            <person name="Sims D."/>
            <person name="Brettin T."/>
            <person name="Bruce D."/>
            <person name="Han C."/>
            <person name="Schmutz J."/>
            <person name="Larimer F."/>
            <person name="Land M."/>
            <person name="Hauser L."/>
            <person name="Kyrpides N."/>
            <person name="Kim E."/>
            <person name="Magnuson T."/>
            <person name="Richardson P."/>
        </authorList>
    </citation>
    <scope>NUCLEOTIDE SEQUENCE [LARGE SCALE GENOMIC DNA]</scope>
    <source>
        <strain>JF-5</strain>
    </source>
</reference>
<feature type="chain" id="PRO_1000049204" description="Small ribosomal subunit protein bS16">
    <location>
        <begin position="1"/>
        <end position="114"/>
    </location>
</feature>
<feature type="region of interest" description="Disordered" evidence="2">
    <location>
        <begin position="87"/>
        <end position="114"/>
    </location>
</feature>
<feature type="compositionally biased region" description="Basic and acidic residues" evidence="2">
    <location>
        <begin position="100"/>
        <end position="114"/>
    </location>
</feature>
<sequence>MSLKIRLARAGAKKRPFYHIVVADSRSPRDGKFIERIGTYNPMLPADHEDRIRLVTDRVTHWLSQGAQATDRVARFIGKAGLAPMPAFREQPVQSAPKKKAQERAAERAKAAEA</sequence>